<protein>
    <recommendedName>
        <fullName>Bifunctional serine/threonine-protein kinase/NEDD4-like E3 ubiquitin-protein ligase</fullName>
    </recommendedName>
    <domain>
        <recommendedName>
            <fullName>Probable serine/threonine-protein kinase DDB_G0276527</fullName>
            <ecNumber>2.7.11.1</ecNumber>
        </recommendedName>
    </domain>
    <domain>
        <recommendedName>
            <fullName>Probable NEDD4-like E3 ubiquitin-protein ligase DDB_G0276527</fullName>
            <ecNumber>2.3.2.26</ecNumber>
        </recommendedName>
        <alternativeName>
            <fullName>HECT-type E3 ubiquitin transferase DDB_G0276527</fullName>
        </alternativeName>
    </domain>
</protein>
<sequence>MSLFFKSIKSKIEETLNHTPQVNLFNNSNNGGNNSNNGGNNSTPTLTKTPSTTNFPYNDYKNYTYKYVYDNTDNYNFNNNNNNNNNNNNNNNNNTKENNFKSIRESASIYKNNEEINNDDNNTIINKKKIEEEEDETNFDTSLIPKLGHEDKDELESDHYITIWGNGIRNYKNCNMSSIGFSEMYNQQKIVLISTGAIHSSFITDQGNLYTFGDGLLGKLGHGNLESYSSPKLVEFFQTKPSLRVVSIANGGKHSLALTICGKVYSWGGNDSCQLGLGNGSSSSYYSLPQLINFNISYNNNNNNNNNNSTNNNNNNNNDGAQQQFSLSQNSSSNNNKIKIVKLSCGTNRSAVITDKGLLFTFGRGDHGRLGLGEQSLLMQSTPKLVQSLQGHFIIDMSSGGGHSLVLTNKGLVFSFGRNDQGQLGIGCFSNQQTIPKQIQWFQTSQQQQQQPINIIKVSAGGYHSIAISDNNDTYAWGRSDYGVLGTSIDVQGDRNLPVLINSNSVVVDNVKFIDVSSGFQHNVAMSIDGSLYSWGCNAGQRLGFKSDENQLTPKKCFINSKDSKPLLFTCGEIITIIVEKRFKEPIIKTELQLPSSTQSQQQTELSLPSSVNSSSDSNFNKSIIDNSSTTTIIKQTNNNIKSTTTTIITRPSSPTPSFLSLANEGKDLLNSTQSNFIEWMTLISKSKGLLNLIQMKATSSLPNLGLSIEKKNKDFDDINRQLKLLVNSNLSLSPLPDNIQSEIDRLVLSRNQLGLGLVSEYQTSIDYWLEIKQQKDLTFLNLSKLLNLSTITTTTTSNTTTTTTATTTTTTTTTTNLINKKVLVHQDEKQQQREKSETELEEEQDEEEEDSEIKNGTLTAIEIQQQSFYLVERLNQGLGNFCNNIMDSTTMVQPLTTATASSTTATATATTTTANTTNSSGIINKNFGESLRLSMEEIQLIVLETQKYAIKYHSLLSQQLQQCDDLINIHRGKLVEVQDFLNKSKLAQSLLEQREKLKSDYRFCKRNSIELSKKIEVIELDYDQNLCDDDDNNHENNSVNNNSNNNNNNNNNNNNNNNNNNNNNNNIDNNINSNSINDSSNNNNNNNNIEKLKNELIKLKKDEQKLLSNQQEINELIIEILDKYVPEFKIKLRANDKISSRIKDTGLLVTDRKFQHYDIIKTLSTHPHNVYLANFNDQLVVLKEFGIGDAFGKQIFERQVSLLKQMNHKCIMPIQAVFYDRNAFMQMEYISGGNLLDWCRNNNNDNENNKRRQPWEIQKIFQQIIQAIAYMHSNCIIHRDLKLENVLIRQDGTPVISDFDLSKDISANVNVTVFNINGGTELYKAPEMKEQNVKGSYSTDIWAFGVMLYKCIFQFVNNNNNGNNGKNNNSDGNENDNNNNNNFLIIREPFLLPEENNLPLPANHSDQRLISLLSSIFQRNPKLRPTAHQIAVHPYFVTSLVEDLLSSRTLIDCREKIAAFRAHISSLSEMAEEMSESLQLTVRREHLVLDFFQFFFKKIESNKLFCRLEVSFQGEKGLDLGGLSSEMYSLLFSDNQIIDNSNNSNNSVSYSIPKNSLFSKKFNLFENSGTESPFYLLNSNDLFNNNNNNNEENNNNNNNNNNNNNNNNNNNNNNNNNNNNNNNNNEENPLLILKNEFTIFKILGKIFLKSIIDGKPIPDCFPTSFFKYLLGVKVNLRDLEIYDPQLAQSFKKVLVLDNIEEYLSTTFEGLIEGGESIPVTDLNKEEFIQRNIERVLVGCRQSKLEAFKSGFMSIDSLNAHFALFSPTELQLLMCGNTLVDSSVLQKNFKFIGFPDTSSTPKDFRRAVDEMNQDEIRLFLRFVTGMVALPLSGFEKSISIIQVPLSQKLPCAHTCSYQLDLPDYNDFDTTKKKLIKMLEYVDGFAFI</sequence>
<gene>
    <name type="ORF">DDB_G0276527</name>
</gene>
<proteinExistence type="inferred from homology"/>
<comment type="catalytic activity">
    <reaction>
        <text>L-seryl-[protein] + ATP = O-phospho-L-seryl-[protein] + ADP + H(+)</text>
        <dbReference type="Rhea" id="RHEA:17989"/>
        <dbReference type="Rhea" id="RHEA-COMP:9863"/>
        <dbReference type="Rhea" id="RHEA-COMP:11604"/>
        <dbReference type="ChEBI" id="CHEBI:15378"/>
        <dbReference type="ChEBI" id="CHEBI:29999"/>
        <dbReference type="ChEBI" id="CHEBI:30616"/>
        <dbReference type="ChEBI" id="CHEBI:83421"/>
        <dbReference type="ChEBI" id="CHEBI:456216"/>
        <dbReference type="EC" id="2.7.11.1"/>
    </reaction>
</comment>
<comment type="catalytic activity">
    <reaction>
        <text>L-threonyl-[protein] + ATP = O-phospho-L-threonyl-[protein] + ADP + H(+)</text>
        <dbReference type="Rhea" id="RHEA:46608"/>
        <dbReference type="Rhea" id="RHEA-COMP:11060"/>
        <dbReference type="Rhea" id="RHEA-COMP:11605"/>
        <dbReference type="ChEBI" id="CHEBI:15378"/>
        <dbReference type="ChEBI" id="CHEBI:30013"/>
        <dbReference type="ChEBI" id="CHEBI:30616"/>
        <dbReference type="ChEBI" id="CHEBI:61977"/>
        <dbReference type="ChEBI" id="CHEBI:456216"/>
        <dbReference type="EC" id="2.7.11.1"/>
    </reaction>
</comment>
<comment type="catalytic activity">
    <reaction>
        <text>S-ubiquitinyl-[E2 ubiquitin-conjugating enzyme]-L-cysteine + [acceptor protein]-L-lysine = [E2 ubiquitin-conjugating enzyme]-L-cysteine + N(6)-ubiquitinyl-[acceptor protein]-L-lysine.</text>
        <dbReference type="EC" id="2.3.2.26"/>
    </reaction>
</comment>
<comment type="pathway">
    <text>Protein modification; protein ubiquitination.</text>
</comment>
<comment type="similarity">
    <text evidence="5">In the N-terminal section; belongs to the protein kinase superfamily. Ser/Thr protein kinase family.</text>
</comment>
<comment type="similarity">
    <text evidence="5">In the C-terminal section; belongs to the protein kinase superfamily. CAMK Ser/Thr protein kinase family.</text>
</comment>
<keyword id="KW-0067">ATP-binding</keyword>
<keyword id="KW-0418">Kinase</keyword>
<keyword id="KW-0547">Nucleotide-binding</keyword>
<keyword id="KW-1185">Reference proteome</keyword>
<keyword id="KW-0677">Repeat</keyword>
<keyword id="KW-0723">Serine/threonine-protein kinase</keyword>
<keyword id="KW-0808">Transferase</keyword>
<keyword id="KW-0833">Ubl conjugation pathway</keyword>
<reference key="1">
    <citation type="journal article" date="2002" name="Nature">
        <title>Sequence and analysis of chromosome 2 of Dictyostelium discoideum.</title>
        <authorList>
            <person name="Gloeckner G."/>
            <person name="Eichinger L."/>
            <person name="Szafranski K."/>
            <person name="Pachebat J.A."/>
            <person name="Bankier A.T."/>
            <person name="Dear P.H."/>
            <person name="Lehmann R."/>
            <person name="Baumgart C."/>
            <person name="Parra G."/>
            <person name="Abril J.F."/>
            <person name="Guigo R."/>
            <person name="Kumpf K."/>
            <person name="Tunggal B."/>
            <person name="Cox E.C."/>
            <person name="Quail M.A."/>
            <person name="Platzer M."/>
            <person name="Rosenthal A."/>
            <person name="Noegel A.A."/>
        </authorList>
    </citation>
    <scope>NUCLEOTIDE SEQUENCE [LARGE SCALE GENOMIC DNA]</scope>
    <source>
        <strain>AX4</strain>
    </source>
</reference>
<reference key="2">
    <citation type="journal article" date="2005" name="Nature">
        <title>The genome of the social amoeba Dictyostelium discoideum.</title>
        <authorList>
            <person name="Eichinger L."/>
            <person name="Pachebat J.A."/>
            <person name="Gloeckner G."/>
            <person name="Rajandream M.A."/>
            <person name="Sucgang R."/>
            <person name="Berriman M."/>
            <person name="Song J."/>
            <person name="Olsen R."/>
            <person name="Szafranski K."/>
            <person name="Xu Q."/>
            <person name="Tunggal B."/>
            <person name="Kummerfeld S."/>
            <person name="Madera M."/>
            <person name="Konfortov B.A."/>
            <person name="Rivero F."/>
            <person name="Bankier A.T."/>
            <person name="Lehmann R."/>
            <person name="Hamlin N."/>
            <person name="Davies R."/>
            <person name="Gaudet P."/>
            <person name="Fey P."/>
            <person name="Pilcher K."/>
            <person name="Chen G."/>
            <person name="Saunders D."/>
            <person name="Sodergren E.J."/>
            <person name="Davis P."/>
            <person name="Kerhornou A."/>
            <person name="Nie X."/>
            <person name="Hall N."/>
            <person name="Anjard C."/>
            <person name="Hemphill L."/>
            <person name="Bason N."/>
            <person name="Farbrother P."/>
            <person name="Desany B."/>
            <person name="Just E."/>
            <person name="Morio T."/>
            <person name="Rost R."/>
            <person name="Churcher C.M."/>
            <person name="Cooper J."/>
            <person name="Haydock S."/>
            <person name="van Driessche N."/>
            <person name="Cronin A."/>
            <person name="Goodhead I."/>
            <person name="Muzny D.M."/>
            <person name="Mourier T."/>
            <person name="Pain A."/>
            <person name="Lu M."/>
            <person name="Harper D."/>
            <person name="Lindsay R."/>
            <person name="Hauser H."/>
            <person name="James K.D."/>
            <person name="Quiles M."/>
            <person name="Madan Babu M."/>
            <person name="Saito T."/>
            <person name="Buchrieser C."/>
            <person name="Wardroper A."/>
            <person name="Felder M."/>
            <person name="Thangavelu M."/>
            <person name="Johnson D."/>
            <person name="Knights A."/>
            <person name="Loulseged H."/>
            <person name="Mungall K.L."/>
            <person name="Oliver K."/>
            <person name="Price C."/>
            <person name="Quail M.A."/>
            <person name="Urushihara H."/>
            <person name="Hernandez J."/>
            <person name="Rabbinowitsch E."/>
            <person name="Steffen D."/>
            <person name="Sanders M."/>
            <person name="Ma J."/>
            <person name="Kohara Y."/>
            <person name="Sharp S."/>
            <person name="Simmonds M.N."/>
            <person name="Spiegler S."/>
            <person name="Tivey A."/>
            <person name="Sugano S."/>
            <person name="White B."/>
            <person name="Walker D."/>
            <person name="Woodward J.R."/>
            <person name="Winckler T."/>
            <person name="Tanaka Y."/>
            <person name="Shaulsky G."/>
            <person name="Schleicher M."/>
            <person name="Weinstock G.M."/>
            <person name="Rosenthal A."/>
            <person name="Cox E.C."/>
            <person name="Chisholm R.L."/>
            <person name="Gibbs R.A."/>
            <person name="Loomis W.F."/>
            <person name="Platzer M."/>
            <person name="Kay R.R."/>
            <person name="Williams J.G."/>
            <person name="Dear P.H."/>
            <person name="Noegel A.A."/>
            <person name="Barrell B.G."/>
            <person name="Kuspa A."/>
        </authorList>
    </citation>
    <scope>NUCLEOTIDE SEQUENCE [LARGE SCALE GENOMIC DNA]</scope>
    <source>
        <strain>AX4</strain>
    </source>
</reference>
<name>SPKUL_DICDI</name>
<evidence type="ECO:0000255" key="1">
    <source>
        <dbReference type="PROSITE-ProRule" id="PRU00104"/>
    </source>
</evidence>
<evidence type="ECO:0000255" key="2">
    <source>
        <dbReference type="PROSITE-ProRule" id="PRU00159"/>
    </source>
</evidence>
<evidence type="ECO:0000255" key="3">
    <source>
        <dbReference type="PROSITE-ProRule" id="PRU10027"/>
    </source>
</evidence>
<evidence type="ECO:0000256" key="4">
    <source>
        <dbReference type="SAM" id="MobiDB-lite"/>
    </source>
</evidence>
<evidence type="ECO:0000305" key="5"/>
<organism>
    <name type="scientific">Dictyostelium discoideum</name>
    <name type="common">Social amoeba</name>
    <dbReference type="NCBI Taxonomy" id="44689"/>
    <lineage>
        <taxon>Eukaryota</taxon>
        <taxon>Amoebozoa</taxon>
        <taxon>Evosea</taxon>
        <taxon>Eumycetozoa</taxon>
        <taxon>Dictyostelia</taxon>
        <taxon>Dictyosteliales</taxon>
        <taxon>Dictyosteliaceae</taxon>
        <taxon>Dictyostelium</taxon>
    </lineage>
</organism>
<dbReference type="EC" id="2.7.11.1"/>
<dbReference type="EC" id="2.3.2.26"/>
<dbReference type="EMBL" id="AAFI02000015">
    <property type="protein sequence ID" value="EAL69217.1"/>
    <property type="molecule type" value="Genomic_DNA"/>
</dbReference>
<dbReference type="RefSeq" id="XP_643080.1">
    <property type="nucleotide sequence ID" value="XM_637988.1"/>
</dbReference>
<dbReference type="SMR" id="Q8SSY6"/>
<dbReference type="STRING" id="44689.Q8SSY6"/>
<dbReference type="GlyGen" id="Q8SSY6">
    <property type="glycosylation" value="1 site"/>
</dbReference>
<dbReference type="PaxDb" id="44689-DDB0219986"/>
<dbReference type="EnsemblProtists" id="EAL69217">
    <property type="protein sequence ID" value="EAL69217"/>
    <property type="gene ID" value="DDB_G0276527"/>
</dbReference>
<dbReference type="GeneID" id="8620484"/>
<dbReference type="KEGG" id="ddi:DDB_G0276527"/>
<dbReference type="dictyBase" id="DDB_G0276527"/>
<dbReference type="VEuPathDB" id="AmoebaDB:DDB_G0276527"/>
<dbReference type="eggNOG" id="KOG0583">
    <property type="taxonomic scope" value="Eukaryota"/>
</dbReference>
<dbReference type="eggNOG" id="KOG0940">
    <property type="taxonomic scope" value="Eukaryota"/>
</dbReference>
<dbReference type="eggNOG" id="KOG1426">
    <property type="taxonomic scope" value="Eukaryota"/>
</dbReference>
<dbReference type="HOGENOM" id="CLU_236105_0_0_1"/>
<dbReference type="InParanoid" id="Q8SSY6"/>
<dbReference type="OMA" id="CGEIITI"/>
<dbReference type="UniPathway" id="UPA00143"/>
<dbReference type="PRO" id="PR:Q8SSY6"/>
<dbReference type="Proteomes" id="UP000002195">
    <property type="component" value="Chromosome 2"/>
</dbReference>
<dbReference type="GO" id="GO:0005524">
    <property type="term" value="F:ATP binding"/>
    <property type="evidence" value="ECO:0007669"/>
    <property type="project" value="UniProtKB-KW"/>
</dbReference>
<dbReference type="GO" id="GO:0106310">
    <property type="term" value="F:protein serine kinase activity"/>
    <property type="evidence" value="ECO:0007669"/>
    <property type="project" value="RHEA"/>
</dbReference>
<dbReference type="GO" id="GO:0004674">
    <property type="term" value="F:protein serine/threonine kinase activity"/>
    <property type="evidence" value="ECO:0007669"/>
    <property type="project" value="UniProtKB-KW"/>
</dbReference>
<dbReference type="GO" id="GO:0004842">
    <property type="term" value="F:ubiquitin-protein transferase activity"/>
    <property type="evidence" value="ECO:0007669"/>
    <property type="project" value="InterPro"/>
</dbReference>
<dbReference type="GO" id="GO:0016567">
    <property type="term" value="P:protein ubiquitination"/>
    <property type="evidence" value="ECO:0007669"/>
    <property type="project" value="UniProtKB-UniPathway"/>
</dbReference>
<dbReference type="CDD" id="cd00180">
    <property type="entry name" value="PKc"/>
    <property type="match status" value="1"/>
</dbReference>
<dbReference type="Gene3D" id="3.30.2160.10">
    <property type="entry name" value="Hect, E3 ligase catalytic domain"/>
    <property type="match status" value="1"/>
</dbReference>
<dbReference type="Gene3D" id="3.30.2410.10">
    <property type="entry name" value="Hect, E3 ligase catalytic domain"/>
    <property type="match status" value="1"/>
</dbReference>
<dbReference type="Gene3D" id="3.90.1750.10">
    <property type="entry name" value="Hect, E3 ligase catalytic domains"/>
    <property type="match status" value="2"/>
</dbReference>
<dbReference type="Gene3D" id="2.130.10.30">
    <property type="entry name" value="Regulator of chromosome condensation 1/beta-lactamase-inhibitor protein II"/>
    <property type="match status" value="2"/>
</dbReference>
<dbReference type="Gene3D" id="1.10.510.10">
    <property type="entry name" value="Transferase(Phosphotransferase) domain 1"/>
    <property type="match status" value="1"/>
</dbReference>
<dbReference type="InterPro" id="IPR000569">
    <property type="entry name" value="HECT_dom"/>
</dbReference>
<dbReference type="InterPro" id="IPR035983">
    <property type="entry name" value="Hect_E3_ubiquitin_ligase"/>
</dbReference>
<dbReference type="InterPro" id="IPR011009">
    <property type="entry name" value="Kinase-like_dom_sf"/>
</dbReference>
<dbReference type="InterPro" id="IPR000719">
    <property type="entry name" value="Prot_kinase_dom"/>
</dbReference>
<dbReference type="InterPro" id="IPR009091">
    <property type="entry name" value="RCC1/BLIP-II"/>
</dbReference>
<dbReference type="InterPro" id="IPR000408">
    <property type="entry name" value="Reg_chr_condens"/>
</dbReference>
<dbReference type="InterPro" id="IPR008271">
    <property type="entry name" value="Ser/Thr_kinase_AS"/>
</dbReference>
<dbReference type="InterPro" id="IPR051709">
    <property type="entry name" value="Ub-ligase/GTPase-reg"/>
</dbReference>
<dbReference type="PANTHER" id="PTHR45622:SF60">
    <property type="entry name" value="UBIQUITIN-PROTEIN LIGASE E3A"/>
    <property type="match status" value="1"/>
</dbReference>
<dbReference type="PANTHER" id="PTHR45622">
    <property type="entry name" value="UBIQUITIN-PROTEIN LIGASE E3A-RELATED"/>
    <property type="match status" value="1"/>
</dbReference>
<dbReference type="Pfam" id="PF00632">
    <property type="entry name" value="HECT"/>
    <property type="match status" value="1"/>
</dbReference>
<dbReference type="Pfam" id="PF00069">
    <property type="entry name" value="Pkinase"/>
    <property type="match status" value="1"/>
</dbReference>
<dbReference type="Pfam" id="PF00415">
    <property type="entry name" value="RCC1"/>
    <property type="match status" value="2"/>
</dbReference>
<dbReference type="Pfam" id="PF25390">
    <property type="entry name" value="WD40_RLD"/>
    <property type="match status" value="1"/>
</dbReference>
<dbReference type="PRINTS" id="PR00633">
    <property type="entry name" value="RCCNDNSATION"/>
</dbReference>
<dbReference type="SMART" id="SM00119">
    <property type="entry name" value="HECTc"/>
    <property type="match status" value="1"/>
</dbReference>
<dbReference type="SMART" id="SM00220">
    <property type="entry name" value="S_TKc"/>
    <property type="match status" value="1"/>
</dbReference>
<dbReference type="SUPFAM" id="SSF56204">
    <property type="entry name" value="Hect, E3 ligase catalytic domain"/>
    <property type="match status" value="1"/>
</dbReference>
<dbReference type="SUPFAM" id="SSF56112">
    <property type="entry name" value="Protein kinase-like (PK-like)"/>
    <property type="match status" value="1"/>
</dbReference>
<dbReference type="SUPFAM" id="SSF50985">
    <property type="entry name" value="RCC1/BLIP-II"/>
    <property type="match status" value="1"/>
</dbReference>
<dbReference type="PROSITE" id="PS50237">
    <property type="entry name" value="HECT"/>
    <property type="match status" value="1"/>
</dbReference>
<dbReference type="PROSITE" id="PS50011">
    <property type="entry name" value="PROTEIN_KINASE_DOM"/>
    <property type="match status" value="1"/>
</dbReference>
<dbReference type="PROSITE" id="PS00108">
    <property type="entry name" value="PROTEIN_KINASE_ST"/>
    <property type="match status" value="1"/>
</dbReference>
<dbReference type="PROSITE" id="PS00626">
    <property type="entry name" value="RCC1_2"/>
    <property type="match status" value="2"/>
</dbReference>
<dbReference type="PROSITE" id="PS50012">
    <property type="entry name" value="RCC1_3"/>
    <property type="match status" value="6"/>
</dbReference>
<feature type="chain" id="PRO_0000368227" description="Bifunctional serine/threonine-protein kinase/NEDD4-like E3 ubiquitin-protein ligase">
    <location>
        <begin position="1"/>
        <end position="1887"/>
    </location>
</feature>
<feature type="repeat" description="RCC1 1">
    <location>
        <begin position="206"/>
        <end position="260"/>
    </location>
</feature>
<feature type="repeat" description="RCC1 2">
    <location>
        <begin position="262"/>
        <end position="314"/>
    </location>
</feature>
<feature type="repeat" description="RCC1 3">
    <location>
        <begin position="356"/>
        <end position="409"/>
    </location>
</feature>
<feature type="repeat" description="RCC1 4">
    <location>
        <begin position="411"/>
        <end position="470"/>
    </location>
</feature>
<feature type="repeat" description="RCC1 5">
    <location>
        <begin position="472"/>
        <end position="528"/>
    </location>
</feature>
<feature type="repeat" description="RCC1 6">
    <location>
        <begin position="529"/>
        <end position="581"/>
    </location>
</feature>
<feature type="domain" description="Protein kinase" evidence="2">
    <location>
        <begin position="1158"/>
        <end position="1437"/>
    </location>
</feature>
<feature type="domain" description="HECT" evidence="1">
    <location>
        <begin position="1501"/>
        <end position="1887"/>
    </location>
</feature>
<feature type="region of interest" description="Disordered" evidence="4">
    <location>
        <begin position="19"/>
        <end position="55"/>
    </location>
</feature>
<feature type="region of interest" description="Disordered" evidence="4">
    <location>
        <begin position="72"/>
        <end position="98"/>
    </location>
</feature>
<feature type="region of interest" description="Disordered" evidence="4">
    <location>
        <begin position="299"/>
        <end position="333"/>
    </location>
</feature>
<feature type="region of interest" description="Disordered" evidence="4">
    <location>
        <begin position="594"/>
        <end position="619"/>
    </location>
</feature>
<feature type="region of interest" description="Disordered" evidence="4">
    <location>
        <begin position="823"/>
        <end position="858"/>
    </location>
</feature>
<feature type="region of interest" description="Disordered" evidence="4">
    <location>
        <begin position="1030"/>
        <end position="1088"/>
    </location>
</feature>
<feature type="region of interest" description="Disordered" evidence="4">
    <location>
        <begin position="1586"/>
        <end position="1628"/>
    </location>
</feature>
<feature type="compositionally biased region" description="Low complexity" evidence="4">
    <location>
        <begin position="26"/>
        <end position="54"/>
    </location>
</feature>
<feature type="compositionally biased region" description="Low complexity" evidence="4">
    <location>
        <begin position="72"/>
        <end position="97"/>
    </location>
</feature>
<feature type="compositionally biased region" description="Basic and acidic residues" evidence="4">
    <location>
        <begin position="825"/>
        <end position="839"/>
    </location>
</feature>
<feature type="compositionally biased region" description="Acidic residues" evidence="4">
    <location>
        <begin position="840"/>
        <end position="852"/>
    </location>
</feature>
<feature type="compositionally biased region" description="Low complexity" evidence="4">
    <location>
        <begin position="1036"/>
        <end position="1088"/>
    </location>
</feature>
<feature type="active site" description="Proton acceptor" evidence="2 3">
    <location>
        <position position="1281"/>
    </location>
</feature>
<feature type="active site" description="Glycyl thioester intermediate" evidence="1">
    <location>
        <position position="1855"/>
    </location>
</feature>
<feature type="binding site" evidence="2">
    <location>
        <begin position="1164"/>
        <end position="1172"/>
    </location>
    <ligand>
        <name>ATP</name>
        <dbReference type="ChEBI" id="CHEBI:30616"/>
    </ligand>
</feature>
<feature type="binding site" evidence="2">
    <location>
        <position position="1184"/>
    </location>
    <ligand>
        <name>ATP</name>
        <dbReference type="ChEBI" id="CHEBI:30616"/>
    </ligand>
</feature>
<accession>Q8SSY6</accession>
<accession>Q551N9</accession>